<name>PGK_ACIC5</name>
<proteinExistence type="inferred from homology"/>
<evidence type="ECO:0000255" key="1">
    <source>
        <dbReference type="HAMAP-Rule" id="MF_00145"/>
    </source>
</evidence>
<keyword id="KW-0067">ATP-binding</keyword>
<keyword id="KW-0963">Cytoplasm</keyword>
<keyword id="KW-0324">Glycolysis</keyword>
<keyword id="KW-0418">Kinase</keyword>
<keyword id="KW-0547">Nucleotide-binding</keyword>
<keyword id="KW-1185">Reference proteome</keyword>
<keyword id="KW-0808">Transferase</keyword>
<sequence>MSKLSIRDLDLAHKHVFMRVDFNVPLSEDGSEITDDTRIRETLPTIEYALRHKAKLILASHLGRPKGKVNPKYSLRPVVDRLRTLLDHDVTSRVNVAFSPDCVGDVAKELSLQLESGQVLLLENLRFHAEEEANDPEFARKLASLCEIYVNDAFGSAHRAHASTEGITHFVKQSAAGLLMEKELEYLGKALEAPAKPFVAIIGGAKVSDKIKVIDNLLNKVDALLIGGGMAYTFLKSQGQDVGKSLVEADKLDIAKAALDKAKEKGVRFLLPVDHILADKFAADAATQTFEGTGAFPAEWMALDIGPKSIELFTKEIAAADTIVWNGPMGVFEMPAFAKGTTAVAQAVADNVDAVSIIGGGDSVAAVKQAGVADKIKHISTGGGASLEFLEGKKLPGVEALTEK</sequence>
<gene>
    <name evidence="1" type="primary">pgk</name>
    <name type="ordered locus">ACP_0631</name>
</gene>
<dbReference type="EC" id="2.7.2.3" evidence="1"/>
<dbReference type="EMBL" id="CP001472">
    <property type="protein sequence ID" value="ACO34607.1"/>
    <property type="molecule type" value="Genomic_DNA"/>
</dbReference>
<dbReference type="RefSeq" id="WP_015895815.1">
    <property type="nucleotide sequence ID" value="NC_012483.1"/>
</dbReference>
<dbReference type="SMR" id="C1F1M9"/>
<dbReference type="FunCoup" id="C1F1M9">
    <property type="interactions" value="495"/>
</dbReference>
<dbReference type="STRING" id="240015.ACP_0631"/>
<dbReference type="KEGG" id="aca:ACP_0631"/>
<dbReference type="eggNOG" id="COG0126">
    <property type="taxonomic scope" value="Bacteria"/>
</dbReference>
<dbReference type="HOGENOM" id="CLU_025427_0_2_0"/>
<dbReference type="InParanoid" id="C1F1M9"/>
<dbReference type="OrthoDB" id="9808460at2"/>
<dbReference type="UniPathway" id="UPA00109">
    <property type="reaction ID" value="UER00185"/>
</dbReference>
<dbReference type="Proteomes" id="UP000002207">
    <property type="component" value="Chromosome"/>
</dbReference>
<dbReference type="GO" id="GO:0005829">
    <property type="term" value="C:cytosol"/>
    <property type="evidence" value="ECO:0007669"/>
    <property type="project" value="TreeGrafter"/>
</dbReference>
<dbReference type="GO" id="GO:0043531">
    <property type="term" value="F:ADP binding"/>
    <property type="evidence" value="ECO:0007669"/>
    <property type="project" value="TreeGrafter"/>
</dbReference>
<dbReference type="GO" id="GO:0005524">
    <property type="term" value="F:ATP binding"/>
    <property type="evidence" value="ECO:0007669"/>
    <property type="project" value="UniProtKB-KW"/>
</dbReference>
<dbReference type="GO" id="GO:0004618">
    <property type="term" value="F:phosphoglycerate kinase activity"/>
    <property type="evidence" value="ECO:0007669"/>
    <property type="project" value="UniProtKB-UniRule"/>
</dbReference>
<dbReference type="GO" id="GO:0006094">
    <property type="term" value="P:gluconeogenesis"/>
    <property type="evidence" value="ECO:0007669"/>
    <property type="project" value="TreeGrafter"/>
</dbReference>
<dbReference type="GO" id="GO:0006096">
    <property type="term" value="P:glycolytic process"/>
    <property type="evidence" value="ECO:0007669"/>
    <property type="project" value="UniProtKB-UniRule"/>
</dbReference>
<dbReference type="CDD" id="cd00318">
    <property type="entry name" value="Phosphoglycerate_kinase"/>
    <property type="match status" value="1"/>
</dbReference>
<dbReference type="FunFam" id="3.40.50.1260:FF:000003">
    <property type="entry name" value="Phosphoglycerate kinase"/>
    <property type="match status" value="1"/>
</dbReference>
<dbReference type="FunFam" id="3.40.50.1260:FF:000006">
    <property type="entry name" value="Phosphoglycerate kinase"/>
    <property type="match status" value="1"/>
</dbReference>
<dbReference type="Gene3D" id="3.40.50.1260">
    <property type="entry name" value="Phosphoglycerate kinase, N-terminal domain"/>
    <property type="match status" value="2"/>
</dbReference>
<dbReference type="HAMAP" id="MF_00145">
    <property type="entry name" value="Phosphoglyc_kinase"/>
    <property type="match status" value="1"/>
</dbReference>
<dbReference type="InterPro" id="IPR001576">
    <property type="entry name" value="Phosphoglycerate_kinase"/>
</dbReference>
<dbReference type="InterPro" id="IPR015911">
    <property type="entry name" value="Phosphoglycerate_kinase_CS"/>
</dbReference>
<dbReference type="InterPro" id="IPR015824">
    <property type="entry name" value="Phosphoglycerate_kinase_N"/>
</dbReference>
<dbReference type="InterPro" id="IPR036043">
    <property type="entry name" value="Phosphoglycerate_kinase_sf"/>
</dbReference>
<dbReference type="PANTHER" id="PTHR11406">
    <property type="entry name" value="PHOSPHOGLYCERATE KINASE"/>
    <property type="match status" value="1"/>
</dbReference>
<dbReference type="PANTHER" id="PTHR11406:SF23">
    <property type="entry name" value="PHOSPHOGLYCERATE KINASE 1, CHLOROPLASTIC-RELATED"/>
    <property type="match status" value="1"/>
</dbReference>
<dbReference type="Pfam" id="PF00162">
    <property type="entry name" value="PGK"/>
    <property type="match status" value="1"/>
</dbReference>
<dbReference type="PIRSF" id="PIRSF000724">
    <property type="entry name" value="Pgk"/>
    <property type="match status" value="1"/>
</dbReference>
<dbReference type="PRINTS" id="PR00477">
    <property type="entry name" value="PHGLYCKINASE"/>
</dbReference>
<dbReference type="SUPFAM" id="SSF53748">
    <property type="entry name" value="Phosphoglycerate kinase"/>
    <property type="match status" value="1"/>
</dbReference>
<dbReference type="PROSITE" id="PS00111">
    <property type="entry name" value="PGLYCERATE_KINASE"/>
    <property type="match status" value="1"/>
</dbReference>
<organism>
    <name type="scientific">Acidobacterium capsulatum (strain ATCC 51196 / DSM 11244 / BCRC 80197 / JCM 7670 / NBRC 15755 / NCIMB 13165 / 161)</name>
    <dbReference type="NCBI Taxonomy" id="240015"/>
    <lineage>
        <taxon>Bacteria</taxon>
        <taxon>Pseudomonadati</taxon>
        <taxon>Acidobacteriota</taxon>
        <taxon>Terriglobia</taxon>
        <taxon>Terriglobales</taxon>
        <taxon>Acidobacteriaceae</taxon>
        <taxon>Acidobacterium</taxon>
    </lineage>
</organism>
<accession>C1F1M9</accession>
<comment type="catalytic activity">
    <reaction evidence="1">
        <text>(2R)-3-phosphoglycerate + ATP = (2R)-3-phospho-glyceroyl phosphate + ADP</text>
        <dbReference type="Rhea" id="RHEA:14801"/>
        <dbReference type="ChEBI" id="CHEBI:30616"/>
        <dbReference type="ChEBI" id="CHEBI:57604"/>
        <dbReference type="ChEBI" id="CHEBI:58272"/>
        <dbReference type="ChEBI" id="CHEBI:456216"/>
        <dbReference type="EC" id="2.7.2.3"/>
    </reaction>
</comment>
<comment type="pathway">
    <text evidence="1">Carbohydrate degradation; glycolysis; pyruvate from D-glyceraldehyde 3-phosphate: step 2/5.</text>
</comment>
<comment type="subunit">
    <text evidence="1">Monomer.</text>
</comment>
<comment type="subcellular location">
    <subcellularLocation>
        <location evidence="1">Cytoplasm</location>
    </subcellularLocation>
</comment>
<comment type="similarity">
    <text evidence="1">Belongs to the phosphoglycerate kinase family.</text>
</comment>
<feature type="chain" id="PRO_1000192788" description="Phosphoglycerate kinase">
    <location>
        <begin position="1"/>
        <end position="404"/>
    </location>
</feature>
<feature type="binding site" evidence="1">
    <location>
        <begin position="21"/>
        <end position="23"/>
    </location>
    <ligand>
        <name>substrate</name>
    </ligand>
</feature>
<feature type="binding site" evidence="1">
    <location>
        <position position="38"/>
    </location>
    <ligand>
        <name>substrate</name>
    </ligand>
</feature>
<feature type="binding site" evidence="1">
    <location>
        <begin position="61"/>
        <end position="64"/>
    </location>
    <ligand>
        <name>substrate</name>
    </ligand>
</feature>
<feature type="binding site" evidence="1">
    <location>
        <position position="126"/>
    </location>
    <ligand>
        <name>substrate</name>
    </ligand>
</feature>
<feature type="binding site" evidence="1">
    <location>
        <position position="159"/>
    </location>
    <ligand>
        <name>substrate</name>
    </ligand>
</feature>
<feature type="binding site" evidence="1">
    <location>
        <position position="210"/>
    </location>
    <ligand>
        <name>ATP</name>
        <dbReference type="ChEBI" id="CHEBI:30616"/>
    </ligand>
</feature>
<feature type="binding site" evidence="1">
    <location>
        <position position="333"/>
    </location>
    <ligand>
        <name>ATP</name>
        <dbReference type="ChEBI" id="CHEBI:30616"/>
    </ligand>
</feature>
<feature type="binding site" evidence="1">
    <location>
        <begin position="360"/>
        <end position="363"/>
    </location>
    <ligand>
        <name>ATP</name>
        <dbReference type="ChEBI" id="CHEBI:30616"/>
    </ligand>
</feature>
<reference key="1">
    <citation type="journal article" date="2009" name="Appl. Environ. Microbiol.">
        <title>Three genomes from the phylum Acidobacteria provide insight into the lifestyles of these microorganisms in soils.</title>
        <authorList>
            <person name="Ward N.L."/>
            <person name="Challacombe J.F."/>
            <person name="Janssen P.H."/>
            <person name="Henrissat B."/>
            <person name="Coutinho P.M."/>
            <person name="Wu M."/>
            <person name="Xie G."/>
            <person name="Haft D.H."/>
            <person name="Sait M."/>
            <person name="Badger J."/>
            <person name="Barabote R.D."/>
            <person name="Bradley B."/>
            <person name="Brettin T.S."/>
            <person name="Brinkac L.M."/>
            <person name="Bruce D."/>
            <person name="Creasy T."/>
            <person name="Daugherty S.C."/>
            <person name="Davidsen T.M."/>
            <person name="DeBoy R.T."/>
            <person name="Detter J.C."/>
            <person name="Dodson R.J."/>
            <person name="Durkin A.S."/>
            <person name="Ganapathy A."/>
            <person name="Gwinn-Giglio M."/>
            <person name="Han C.S."/>
            <person name="Khouri H."/>
            <person name="Kiss H."/>
            <person name="Kothari S.P."/>
            <person name="Madupu R."/>
            <person name="Nelson K.E."/>
            <person name="Nelson W.C."/>
            <person name="Paulsen I."/>
            <person name="Penn K."/>
            <person name="Ren Q."/>
            <person name="Rosovitz M.J."/>
            <person name="Selengut J.D."/>
            <person name="Shrivastava S."/>
            <person name="Sullivan S.A."/>
            <person name="Tapia R."/>
            <person name="Thompson L.S."/>
            <person name="Watkins K.L."/>
            <person name="Yang Q."/>
            <person name="Yu C."/>
            <person name="Zafar N."/>
            <person name="Zhou L."/>
            <person name="Kuske C.R."/>
        </authorList>
    </citation>
    <scope>NUCLEOTIDE SEQUENCE [LARGE SCALE GENOMIC DNA]</scope>
    <source>
        <strain>ATCC 51196 / DSM 11244 / BCRC 80197 / JCM 7670 / NBRC 15755 / NCIMB 13165 / 161</strain>
    </source>
</reference>
<protein>
    <recommendedName>
        <fullName evidence="1">Phosphoglycerate kinase</fullName>
        <ecNumber evidence="1">2.7.2.3</ecNumber>
    </recommendedName>
</protein>